<reference key="1">
    <citation type="journal article" date="2005" name="BMC Genomics">
        <title>Characterization of 954 bovine full-CDS cDNA sequences.</title>
        <authorList>
            <person name="Harhay G.P."/>
            <person name="Sonstegard T.S."/>
            <person name="Keele J.W."/>
            <person name="Heaton M.P."/>
            <person name="Clawson M.L."/>
            <person name="Snelling W.M."/>
            <person name="Wiedmann R.T."/>
            <person name="Van Tassell C.P."/>
            <person name="Smith T.P.L."/>
        </authorList>
    </citation>
    <scope>NUCLEOTIDE SEQUENCE [LARGE SCALE MRNA] (ISOFORM 2)</scope>
</reference>
<reference key="2">
    <citation type="submission" date="2007-07" db="EMBL/GenBank/DDBJ databases">
        <authorList>
            <consortium name="NIH - Mammalian Gene Collection (MGC) project"/>
        </authorList>
    </citation>
    <scope>NUCLEOTIDE SEQUENCE [LARGE SCALE MRNA] (ISOFORM 1)</scope>
    <source>
        <strain>Hereford</strain>
        <tissue>Fetal cerebellum</tissue>
    </source>
</reference>
<keyword id="KW-0025">Alternative splicing</keyword>
<keyword id="KW-0050">Antiport</keyword>
<keyword id="KW-0325">Glycoprotein</keyword>
<keyword id="KW-0333">Golgi apparatus</keyword>
<keyword id="KW-0472">Membrane</keyword>
<keyword id="KW-0597">Phosphoprotein</keyword>
<keyword id="KW-1185">Reference proteome</keyword>
<keyword id="KW-0762">Sugar transport</keyword>
<keyword id="KW-0812">Transmembrane</keyword>
<keyword id="KW-1133">Transmembrane helix</keyword>
<keyword id="KW-0813">Transport</keyword>
<feature type="chain" id="PRO_0000309354" description="UDP-sugar transporter protein SLC35A5">
    <location>
        <begin position="1"/>
        <end position="425"/>
    </location>
</feature>
<feature type="topological domain" description="Cytoplasmic" evidence="5">
    <location>
        <begin position="1"/>
        <end position="7"/>
    </location>
</feature>
<feature type="transmembrane region" description="Helical" evidence="2">
    <location>
        <begin position="8"/>
        <end position="28"/>
    </location>
</feature>
<feature type="topological domain" description="Lumenal" evidence="5">
    <location>
        <begin position="29"/>
        <end position="52"/>
    </location>
</feature>
<feature type="transmembrane region" description="Helical" evidence="2">
    <location>
        <begin position="53"/>
        <end position="73"/>
    </location>
</feature>
<feature type="topological domain" description="Cytoplasmic" evidence="5">
    <location>
        <begin position="74"/>
        <end position="92"/>
    </location>
</feature>
<feature type="transmembrane region" description="Helical" evidence="2">
    <location>
        <begin position="93"/>
        <end position="115"/>
    </location>
</feature>
<feature type="topological domain" description="Lumenal" evidence="5">
    <location>
        <begin position="116"/>
        <end position="119"/>
    </location>
</feature>
<feature type="transmembrane region" description="Helical" evidence="2">
    <location>
        <begin position="120"/>
        <end position="142"/>
    </location>
</feature>
<feature type="topological domain" description="Cytoplasmic" evidence="5">
    <location>
        <begin position="143"/>
        <end position="147"/>
    </location>
</feature>
<feature type="transmembrane region" description="Helical" evidence="2">
    <location>
        <begin position="148"/>
        <end position="168"/>
    </location>
</feature>
<feature type="topological domain" description="Lumenal" evidence="5">
    <location>
        <begin position="169"/>
        <end position="228"/>
    </location>
</feature>
<feature type="transmembrane region" description="Helical" evidence="2">
    <location>
        <begin position="229"/>
        <end position="249"/>
    </location>
</feature>
<feature type="topological domain" description="Cytoplasmic" evidence="5">
    <location>
        <begin position="250"/>
        <end position="263"/>
    </location>
</feature>
<feature type="transmembrane region" description="Helical" evidence="2">
    <location>
        <begin position="264"/>
        <end position="284"/>
    </location>
</feature>
<feature type="topological domain" description="Lumenal" evidence="5">
    <location>
        <begin position="285"/>
        <end position="303"/>
    </location>
</feature>
<feature type="transmembrane region" description="Helical" evidence="2">
    <location>
        <begin position="304"/>
        <end position="324"/>
    </location>
</feature>
<feature type="topological domain" description="Cytoplasmic" evidence="5">
    <location>
        <begin position="325"/>
        <end position="330"/>
    </location>
</feature>
<feature type="transmembrane region" description="Helical" evidence="2">
    <location>
        <begin position="331"/>
        <end position="351"/>
    </location>
</feature>
<feature type="topological domain" description="Lumenal" evidence="5">
    <location>
        <begin position="352"/>
        <end position="354"/>
    </location>
</feature>
<feature type="transmembrane region" description="Helical" evidence="2">
    <location>
        <begin position="355"/>
        <end position="375"/>
    </location>
</feature>
<feature type="topological domain" description="Cytoplasmic" evidence="5">
    <location>
        <begin position="376"/>
        <end position="425"/>
    </location>
</feature>
<feature type="region of interest" description="Disordered" evidence="3">
    <location>
        <begin position="398"/>
        <end position="425"/>
    </location>
</feature>
<feature type="compositionally biased region" description="Basic and acidic residues" evidence="3">
    <location>
        <begin position="408"/>
        <end position="418"/>
    </location>
</feature>
<feature type="modified residue" description="Phosphoserine" evidence="1">
    <location>
        <position position="394"/>
    </location>
</feature>
<feature type="modified residue" description="Phosphoserine" evidence="1">
    <location>
        <position position="416"/>
    </location>
</feature>
<feature type="modified residue" description="Phosphoserine" evidence="1">
    <location>
        <position position="420"/>
    </location>
</feature>
<feature type="glycosylation site" description="N-linked (GlcNAc...) asparagine" evidence="2">
    <location>
        <position position="204"/>
    </location>
</feature>
<feature type="glycosylation site" description="N-linked (GlcNAc...) asparagine" evidence="2">
    <location>
        <position position="218"/>
    </location>
</feature>
<feature type="splice variant" id="VSP_029149" description="In isoform 2." evidence="4">
    <original>AMA</original>
    <variation>VSK</variation>
    <location>
        <begin position="121"/>
        <end position="123"/>
    </location>
</feature>
<feature type="splice variant" id="VSP_029150" description="In isoform 2." evidence="4">
    <location>
        <begin position="124"/>
        <end position="425"/>
    </location>
</feature>
<name>S35A5_BOVIN</name>
<gene>
    <name evidence="1" type="primary">SLC35A5</name>
</gene>
<dbReference type="EMBL" id="BT026194">
    <property type="protein sequence ID" value="ABG67033.1"/>
    <property type="molecule type" value="mRNA"/>
</dbReference>
<dbReference type="EMBL" id="BC149334">
    <property type="protein sequence ID" value="AAI49335.1"/>
    <property type="molecule type" value="mRNA"/>
</dbReference>
<dbReference type="RefSeq" id="NP_001069493.2">
    <molecule id="A6QPI1-1"/>
    <property type="nucleotide sequence ID" value="NM_001076025.2"/>
</dbReference>
<dbReference type="RefSeq" id="XP_005201388.2">
    <molecule id="A6QPI1-1"/>
    <property type="nucleotide sequence ID" value="XM_005201331.5"/>
</dbReference>
<dbReference type="SMR" id="A6QPI1"/>
<dbReference type="FunCoup" id="A6QPI1">
    <property type="interactions" value="1767"/>
</dbReference>
<dbReference type="STRING" id="9913.ENSBTAP00000011977"/>
<dbReference type="GlyCosmos" id="A6QPI1">
    <property type="glycosylation" value="2 sites, No reported glycans"/>
</dbReference>
<dbReference type="GlyGen" id="A6QPI1">
    <property type="glycosylation" value="2 sites"/>
</dbReference>
<dbReference type="PaxDb" id="9913-ENSBTAP00000011977"/>
<dbReference type="GeneID" id="534488"/>
<dbReference type="KEGG" id="bta:534488"/>
<dbReference type="CTD" id="55032"/>
<dbReference type="VEuPathDB" id="HostDB:ENSBTAG00000009085"/>
<dbReference type="eggNOG" id="KOG2234">
    <property type="taxonomic scope" value="Eukaryota"/>
</dbReference>
<dbReference type="HOGENOM" id="CLU_044353_0_0_1"/>
<dbReference type="InParanoid" id="A6QPI1"/>
<dbReference type="OMA" id="SCLKWAV"/>
<dbReference type="OrthoDB" id="408493at2759"/>
<dbReference type="TreeFam" id="TF354304"/>
<dbReference type="Proteomes" id="UP000009136">
    <property type="component" value="Chromosome 1"/>
</dbReference>
<dbReference type="Bgee" id="ENSBTAG00000009085">
    <property type="expression patterns" value="Expressed in occipital lobe and 103 other cell types or tissues"/>
</dbReference>
<dbReference type="GO" id="GO:0000139">
    <property type="term" value="C:Golgi membrane"/>
    <property type="evidence" value="ECO:0000250"/>
    <property type="project" value="UniProtKB"/>
</dbReference>
<dbReference type="GO" id="GO:0015297">
    <property type="term" value="F:antiporter activity"/>
    <property type="evidence" value="ECO:0007669"/>
    <property type="project" value="UniProtKB-KW"/>
</dbReference>
<dbReference type="GO" id="GO:0015165">
    <property type="term" value="F:pyrimidine nucleotide-sugar transmembrane transporter activity"/>
    <property type="evidence" value="ECO:0000250"/>
    <property type="project" value="UniProtKB"/>
</dbReference>
<dbReference type="GO" id="GO:0022857">
    <property type="term" value="F:transmembrane transporter activity"/>
    <property type="evidence" value="ECO:0000318"/>
    <property type="project" value="GO_Central"/>
</dbReference>
<dbReference type="GO" id="GO:0055085">
    <property type="term" value="P:transmembrane transport"/>
    <property type="evidence" value="ECO:0000318"/>
    <property type="project" value="GO_Central"/>
</dbReference>
<dbReference type="InterPro" id="IPR007271">
    <property type="entry name" value="Nuc_sug_transpt"/>
</dbReference>
<dbReference type="NCBIfam" id="TIGR00803">
    <property type="entry name" value="nst"/>
    <property type="match status" value="1"/>
</dbReference>
<dbReference type="PANTHER" id="PTHR10231">
    <property type="entry name" value="NUCLEOTIDE-SUGAR TRANSMEMBRANE TRANSPORTER"/>
    <property type="match status" value="1"/>
</dbReference>
<dbReference type="Pfam" id="PF04142">
    <property type="entry name" value="Nuc_sug_transp"/>
    <property type="match status" value="1"/>
</dbReference>
<dbReference type="PIRSF" id="PIRSF005799">
    <property type="entry name" value="UDP-gal_transpt"/>
    <property type="match status" value="1"/>
</dbReference>
<dbReference type="SUPFAM" id="SSF103481">
    <property type="entry name" value="Multidrug resistance efflux transporter EmrE"/>
    <property type="match status" value="1"/>
</dbReference>
<sequence length="425" mass="48142">MESNCGHPMLSVSSAMYTFLLGAIFITLSSSRILLVKYSANEENKYDYLPTTVNVCSELVKLVFCALVSFWVLKKEDHQNRKLRCGSWKEFFNFMKWSIPAFLYFLDNLIVFYVLSYLQPAMAVIFSNFSIITTALLFRIVLKRHLNGIQWASLLILFLSIVALTSGTETSQHSLAGHGFHHDALFSPSNSCLLFRSECPRKDNCTAKEWTFSEAQWNTTARVFSHIRLGLGHVLIIVQCFISSMANIYNEKILKEGNQLTESIFVQNSKLYFFGVLFNGLTLGLQSGNRDQIKNCGIFYGHNAFSVALIFVTAFQGLSVAFILKFLDNMFHVLMAQVTTVVITTVSVLVFDFRPSLEFFLEAPSVLLSILIYNASNPQGVENVPRKERIRDLSGTLWERSSGDGEELERLTKPKSDIESDEDTF</sequence>
<accession>A6QPI1</accession>
<accession>Q0V8M4</accession>
<proteinExistence type="evidence at transcript level"/>
<evidence type="ECO:0000250" key="1">
    <source>
        <dbReference type="UniProtKB" id="Q9BS91"/>
    </source>
</evidence>
<evidence type="ECO:0000255" key="2"/>
<evidence type="ECO:0000256" key="3">
    <source>
        <dbReference type="SAM" id="MobiDB-lite"/>
    </source>
</evidence>
<evidence type="ECO:0000303" key="4">
    <source>
    </source>
</evidence>
<evidence type="ECO:0000305" key="5"/>
<protein>
    <recommendedName>
        <fullName evidence="1">UDP-sugar transporter protein SLC35A5</fullName>
    </recommendedName>
    <alternativeName>
        <fullName evidence="1">Solute carrier family 35 member A5</fullName>
    </alternativeName>
</protein>
<comment type="function">
    <text evidence="1">Probable UDP-sugar:UMP transmembrane antiporter involved in UDP-alpha-D-glucuronate/UDP-GlcA, UDP-GlcNAc/UDP-N-acetyl-alpha-D-glucosamine and UDP-N-acetyl-alpha-D-galactosamine/UDP-GalNAc transport from the cytosol to the lumen of the Golgi.</text>
</comment>
<comment type="catalytic activity">
    <reaction evidence="1">
        <text>UMP(out) + UDP-alpha-D-glucuronate(in) = UMP(in) + UDP-alpha-D-glucuronate(out)</text>
        <dbReference type="Rhea" id="RHEA:72727"/>
        <dbReference type="ChEBI" id="CHEBI:57865"/>
        <dbReference type="ChEBI" id="CHEBI:58052"/>
    </reaction>
</comment>
<comment type="catalytic activity">
    <reaction evidence="1">
        <text>UMP(out) + UDP-N-acetyl-alpha-D-glucosamine(in) = UMP(in) + UDP-N-acetyl-alpha-D-glucosamine(out)</text>
        <dbReference type="Rhea" id="RHEA:72695"/>
        <dbReference type="ChEBI" id="CHEBI:57705"/>
        <dbReference type="ChEBI" id="CHEBI:57865"/>
    </reaction>
</comment>
<comment type="catalytic activity">
    <reaction evidence="1">
        <text>UDP-N-acetyl-alpha-D-galactosamine(in) + UMP(out) = UDP-N-acetyl-alpha-D-galactosamine(out) + UMP(in)</text>
        <dbReference type="Rhea" id="RHEA:72735"/>
        <dbReference type="ChEBI" id="CHEBI:57865"/>
        <dbReference type="ChEBI" id="CHEBI:67138"/>
    </reaction>
</comment>
<comment type="subunit">
    <text evidence="1">Probably forms homooligomers and heterooligomers with SLC35A1, SLC35A2, SLC35A3 and SLC35A4.</text>
</comment>
<comment type="subcellular location">
    <subcellularLocation>
        <location evidence="1">Golgi apparatus membrane</location>
        <topology evidence="2">Multi-pass membrane protein</topology>
    </subcellularLocation>
</comment>
<comment type="alternative products">
    <event type="alternative splicing"/>
    <isoform>
        <id>A6QPI1-1</id>
        <name>1</name>
        <sequence type="displayed"/>
    </isoform>
    <isoform>
        <id>A6QPI1-2</id>
        <name>2</name>
        <sequence type="described" ref="VSP_029149 VSP_029150"/>
    </isoform>
</comment>
<comment type="similarity">
    <text evidence="5">Belongs to the nucleotide-sugar transporter family. SLC35A subfamily.</text>
</comment>
<organism>
    <name type="scientific">Bos taurus</name>
    <name type="common">Bovine</name>
    <dbReference type="NCBI Taxonomy" id="9913"/>
    <lineage>
        <taxon>Eukaryota</taxon>
        <taxon>Metazoa</taxon>
        <taxon>Chordata</taxon>
        <taxon>Craniata</taxon>
        <taxon>Vertebrata</taxon>
        <taxon>Euteleostomi</taxon>
        <taxon>Mammalia</taxon>
        <taxon>Eutheria</taxon>
        <taxon>Laurasiatheria</taxon>
        <taxon>Artiodactyla</taxon>
        <taxon>Ruminantia</taxon>
        <taxon>Pecora</taxon>
        <taxon>Bovidae</taxon>
        <taxon>Bovinae</taxon>
        <taxon>Bos</taxon>
    </lineage>
</organism>